<proteinExistence type="inferred from homology"/>
<keyword id="KW-0028">Amino-acid biosynthesis</keyword>
<keyword id="KW-0055">Arginine biosynthesis</keyword>
<keyword id="KW-0067">ATP-binding</keyword>
<keyword id="KW-0963">Cytoplasm</keyword>
<keyword id="KW-0436">Ligase</keyword>
<keyword id="KW-0547">Nucleotide-binding</keyword>
<keyword id="KW-1185">Reference proteome</keyword>
<feature type="chain" id="PRO_0000329468" description="Argininosuccinate synthase">
    <location>
        <begin position="1"/>
        <end position="407"/>
    </location>
</feature>
<feature type="binding site" evidence="1">
    <location>
        <begin position="8"/>
        <end position="16"/>
    </location>
    <ligand>
        <name>ATP</name>
        <dbReference type="ChEBI" id="CHEBI:30616"/>
    </ligand>
</feature>
<feature type="binding site" evidence="1">
    <location>
        <position position="86"/>
    </location>
    <ligand>
        <name>L-citrulline</name>
        <dbReference type="ChEBI" id="CHEBI:57743"/>
    </ligand>
</feature>
<feature type="binding site" evidence="1">
    <location>
        <position position="91"/>
    </location>
    <ligand>
        <name>L-citrulline</name>
        <dbReference type="ChEBI" id="CHEBI:57743"/>
    </ligand>
</feature>
<feature type="binding site" evidence="1">
    <location>
        <position position="116"/>
    </location>
    <ligand>
        <name>ATP</name>
        <dbReference type="ChEBI" id="CHEBI:30616"/>
    </ligand>
</feature>
<feature type="binding site" evidence="1">
    <location>
        <position position="118"/>
    </location>
    <ligand>
        <name>L-aspartate</name>
        <dbReference type="ChEBI" id="CHEBI:29991"/>
    </ligand>
</feature>
<feature type="binding site" evidence="1">
    <location>
        <position position="122"/>
    </location>
    <ligand>
        <name>L-aspartate</name>
        <dbReference type="ChEBI" id="CHEBI:29991"/>
    </ligand>
</feature>
<feature type="binding site" evidence="1">
    <location>
        <position position="122"/>
    </location>
    <ligand>
        <name>L-citrulline</name>
        <dbReference type="ChEBI" id="CHEBI:57743"/>
    </ligand>
</feature>
<feature type="binding site" evidence="1">
    <location>
        <position position="123"/>
    </location>
    <ligand>
        <name>L-aspartate</name>
        <dbReference type="ChEBI" id="CHEBI:29991"/>
    </ligand>
</feature>
<feature type="binding site" evidence="1">
    <location>
        <position position="126"/>
    </location>
    <ligand>
        <name>L-citrulline</name>
        <dbReference type="ChEBI" id="CHEBI:57743"/>
    </ligand>
</feature>
<feature type="binding site" evidence="1">
    <location>
        <position position="178"/>
    </location>
    <ligand>
        <name>L-citrulline</name>
        <dbReference type="ChEBI" id="CHEBI:57743"/>
    </ligand>
</feature>
<feature type="binding site" evidence="1">
    <location>
        <position position="187"/>
    </location>
    <ligand>
        <name>L-citrulline</name>
        <dbReference type="ChEBI" id="CHEBI:57743"/>
    </ligand>
</feature>
<feature type="binding site" evidence="1">
    <location>
        <position position="264"/>
    </location>
    <ligand>
        <name>L-citrulline</name>
        <dbReference type="ChEBI" id="CHEBI:57743"/>
    </ligand>
</feature>
<feature type="binding site" evidence="1">
    <location>
        <position position="276"/>
    </location>
    <ligand>
        <name>L-citrulline</name>
        <dbReference type="ChEBI" id="CHEBI:57743"/>
    </ligand>
</feature>
<protein>
    <recommendedName>
        <fullName evidence="1">Argininosuccinate synthase</fullName>
        <ecNumber evidence="1">6.3.4.5</ecNumber>
    </recommendedName>
    <alternativeName>
        <fullName evidence="1">Citrulline--aspartate ligase</fullName>
    </alternativeName>
</protein>
<evidence type="ECO:0000255" key="1">
    <source>
        <dbReference type="HAMAP-Rule" id="MF_00005"/>
    </source>
</evidence>
<sequence>MKEKVILAYSGGLDTTAIIPWLKENYDYDVVCCCIDVGQGNELDGLEERAKLSGATKLYIEHVTDEFVDEYVMPCVKAGAVYENKYLLGTSMARPVIAKKLVEVAIKENAVAICHGATGKGNDQVRFELGIKALAPDLKIIAPWRCNNTWKMQSREDEIEYCKAHGIDLPFDASHSYSRDRNLWHISHEGLELEDPANAPNYDHLLVLGVSPEKAPNEAESLSLTFEKGIPVALNGKAMKASEIIEELNVLGGKYGIGIIDIVENRVVGMKSRGVYETPGGTILMEAHTQLEELILDRATLSCKKEIGNKFADVVYEGKWFTPLREALQAFVEVTQEYVTGEVKLKLYKGNIIKQGTTSPYSLYNESIASFTTGELYNHHDAEGFINLFGLSLKVRAMKMAEVEKNK</sequence>
<dbReference type="EC" id="6.3.4.5" evidence="1"/>
<dbReference type="EMBL" id="CP000885">
    <property type="protein sequence ID" value="ABX42299.1"/>
    <property type="molecule type" value="Genomic_DNA"/>
</dbReference>
<dbReference type="RefSeq" id="WP_012199953.1">
    <property type="nucleotide sequence ID" value="NC_010001.1"/>
</dbReference>
<dbReference type="SMR" id="A9KHL4"/>
<dbReference type="STRING" id="357809.Cphy_1931"/>
<dbReference type="KEGG" id="cpy:Cphy_1931"/>
<dbReference type="eggNOG" id="COG0137">
    <property type="taxonomic scope" value="Bacteria"/>
</dbReference>
<dbReference type="HOGENOM" id="CLU_032784_4_2_9"/>
<dbReference type="UniPathway" id="UPA00068">
    <property type="reaction ID" value="UER00113"/>
</dbReference>
<dbReference type="Proteomes" id="UP000000370">
    <property type="component" value="Chromosome"/>
</dbReference>
<dbReference type="GO" id="GO:0005737">
    <property type="term" value="C:cytoplasm"/>
    <property type="evidence" value="ECO:0007669"/>
    <property type="project" value="UniProtKB-SubCell"/>
</dbReference>
<dbReference type="GO" id="GO:0004055">
    <property type="term" value="F:argininosuccinate synthase activity"/>
    <property type="evidence" value="ECO:0007669"/>
    <property type="project" value="UniProtKB-UniRule"/>
</dbReference>
<dbReference type="GO" id="GO:0005524">
    <property type="term" value="F:ATP binding"/>
    <property type="evidence" value="ECO:0007669"/>
    <property type="project" value="UniProtKB-UniRule"/>
</dbReference>
<dbReference type="GO" id="GO:0000053">
    <property type="term" value="P:argininosuccinate metabolic process"/>
    <property type="evidence" value="ECO:0007669"/>
    <property type="project" value="TreeGrafter"/>
</dbReference>
<dbReference type="GO" id="GO:0006526">
    <property type="term" value="P:L-arginine biosynthetic process"/>
    <property type="evidence" value="ECO:0007669"/>
    <property type="project" value="UniProtKB-UniRule"/>
</dbReference>
<dbReference type="GO" id="GO:0000050">
    <property type="term" value="P:urea cycle"/>
    <property type="evidence" value="ECO:0007669"/>
    <property type="project" value="TreeGrafter"/>
</dbReference>
<dbReference type="CDD" id="cd01999">
    <property type="entry name" value="ASS"/>
    <property type="match status" value="1"/>
</dbReference>
<dbReference type="FunFam" id="3.40.50.620:FF:000019">
    <property type="entry name" value="Argininosuccinate synthase"/>
    <property type="match status" value="1"/>
</dbReference>
<dbReference type="FunFam" id="3.90.1260.10:FF:000007">
    <property type="entry name" value="Argininosuccinate synthase"/>
    <property type="match status" value="1"/>
</dbReference>
<dbReference type="Gene3D" id="3.90.1260.10">
    <property type="entry name" value="Argininosuccinate synthetase, chain A, domain 2"/>
    <property type="match status" value="1"/>
</dbReference>
<dbReference type="Gene3D" id="3.40.50.620">
    <property type="entry name" value="HUPs"/>
    <property type="match status" value="1"/>
</dbReference>
<dbReference type="Gene3D" id="1.20.5.470">
    <property type="entry name" value="Single helix bin"/>
    <property type="match status" value="1"/>
</dbReference>
<dbReference type="HAMAP" id="MF_00005">
    <property type="entry name" value="Arg_succ_synth_type1"/>
    <property type="match status" value="1"/>
</dbReference>
<dbReference type="InterPro" id="IPR048268">
    <property type="entry name" value="Arginosuc_syn_C"/>
</dbReference>
<dbReference type="InterPro" id="IPR048267">
    <property type="entry name" value="Arginosuc_syn_N"/>
</dbReference>
<dbReference type="InterPro" id="IPR001518">
    <property type="entry name" value="Arginosuc_synth"/>
</dbReference>
<dbReference type="InterPro" id="IPR018223">
    <property type="entry name" value="Arginosuc_synth_CS"/>
</dbReference>
<dbReference type="InterPro" id="IPR023434">
    <property type="entry name" value="Arginosuc_synth_type_1_subfam"/>
</dbReference>
<dbReference type="InterPro" id="IPR024074">
    <property type="entry name" value="AS_cat/multimer_dom_body"/>
</dbReference>
<dbReference type="InterPro" id="IPR014729">
    <property type="entry name" value="Rossmann-like_a/b/a_fold"/>
</dbReference>
<dbReference type="NCBIfam" id="TIGR00032">
    <property type="entry name" value="argG"/>
    <property type="match status" value="1"/>
</dbReference>
<dbReference type="NCBIfam" id="NF001770">
    <property type="entry name" value="PRK00509.1"/>
    <property type="match status" value="1"/>
</dbReference>
<dbReference type="PANTHER" id="PTHR11587">
    <property type="entry name" value="ARGININOSUCCINATE SYNTHASE"/>
    <property type="match status" value="1"/>
</dbReference>
<dbReference type="PANTHER" id="PTHR11587:SF2">
    <property type="entry name" value="ARGININOSUCCINATE SYNTHASE"/>
    <property type="match status" value="1"/>
</dbReference>
<dbReference type="Pfam" id="PF20979">
    <property type="entry name" value="Arginosuc_syn_C"/>
    <property type="match status" value="1"/>
</dbReference>
<dbReference type="Pfam" id="PF00764">
    <property type="entry name" value="Arginosuc_synth"/>
    <property type="match status" value="1"/>
</dbReference>
<dbReference type="SUPFAM" id="SSF52402">
    <property type="entry name" value="Adenine nucleotide alpha hydrolases-like"/>
    <property type="match status" value="1"/>
</dbReference>
<dbReference type="SUPFAM" id="SSF69864">
    <property type="entry name" value="Argininosuccinate synthetase, C-terminal domain"/>
    <property type="match status" value="1"/>
</dbReference>
<dbReference type="PROSITE" id="PS00564">
    <property type="entry name" value="ARGININOSUCCIN_SYN_1"/>
    <property type="match status" value="1"/>
</dbReference>
<dbReference type="PROSITE" id="PS00565">
    <property type="entry name" value="ARGININOSUCCIN_SYN_2"/>
    <property type="match status" value="1"/>
</dbReference>
<comment type="catalytic activity">
    <reaction evidence="1">
        <text>L-citrulline + L-aspartate + ATP = 2-(N(omega)-L-arginino)succinate + AMP + diphosphate + H(+)</text>
        <dbReference type="Rhea" id="RHEA:10932"/>
        <dbReference type="ChEBI" id="CHEBI:15378"/>
        <dbReference type="ChEBI" id="CHEBI:29991"/>
        <dbReference type="ChEBI" id="CHEBI:30616"/>
        <dbReference type="ChEBI" id="CHEBI:33019"/>
        <dbReference type="ChEBI" id="CHEBI:57472"/>
        <dbReference type="ChEBI" id="CHEBI:57743"/>
        <dbReference type="ChEBI" id="CHEBI:456215"/>
        <dbReference type="EC" id="6.3.4.5"/>
    </reaction>
</comment>
<comment type="pathway">
    <text evidence="1">Amino-acid biosynthesis; L-arginine biosynthesis; L-arginine from L-ornithine and carbamoyl phosphate: step 2/3.</text>
</comment>
<comment type="subunit">
    <text evidence="1">Homotetramer.</text>
</comment>
<comment type="subcellular location">
    <subcellularLocation>
        <location evidence="1">Cytoplasm</location>
    </subcellularLocation>
</comment>
<comment type="similarity">
    <text evidence="1">Belongs to the argininosuccinate synthase family. Type 1 subfamily.</text>
</comment>
<name>ASSY_LACP7</name>
<accession>A9KHL4</accession>
<organism>
    <name type="scientific">Lachnoclostridium phytofermentans (strain ATCC 700394 / DSM 18823 / ISDg)</name>
    <name type="common">Clostridium phytofermentans</name>
    <dbReference type="NCBI Taxonomy" id="357809"/>
    <lineage>
        <taxon>Bacteria</taxon>
        <taxon>Bacillati</taxon>
        <taxon>Bacillota</taxon>
        <taxon>Clostridia</taxon>
        <taxon>Lachnospirales</taxon>
        <taxon>Lachnospiraceae</taxon>
    </lineage>
</organism>
<reference key="1">
    <citation type="submission" date="2007-11" db="EMBL/GenBank/DDBJ databases">
        <title>Complete genome sequence of Clostridium phytofermentans ISDg.</title>
        <authorList>
            <person name="Leschine S.B."/>
            <person name="Warnick T.A."/>
            <person name="Blanchard J.L."/>
            <person name="Schnell D.J."/>
            <person name="Petit E.L."/>
            <person name="LaTouf W.G."/>
            <person name="Copeland A."/>
            <person name="Lucas S."/>
            <person name="Lapidus A."/>
            <person name="Barry K."/>
            <person name="Glavina del Rio T."/>
            <person name="Dalin E."/>
            <person name="Tice H."/>
            <person name="Pitluck S."/>
            <person name="Kiss H."/>
            <person name="Brettin T."/>
            <person name="Bruce D."/>
            <person name="Detter J.C."/>
            <person name="Han C."/>
            <person name="Kuske C."/>
            <person name="Schmutz J."/>
            <person name="Larimer F."/>
            <person name="Land M."/>
            <person name="Hauser L."/>
            <person name="Kyrpides N."/>
            <person name="Kim E.A."/>
            <person name="Richardson P."/>
        </authorList>
    </citation>
    <scope>NUCLEOTIDE SEQUENCE [LARGE SCALE GENOMIC DNA]</scope>
    <source>
        <strain>ATCC 700394 / DSM 18823 / ISDg</strain>
    </source>
</reference>
<gene>
    <name evidence="1" type="primary">argG</name>
    <name type="ordered locus">Cphy_1931</name>
</gene>